<name>MNME_ALKEH</name>
<dbReference type="EC" id="3.6.-.-" evidence="1"/>
<dbReference type="EMBL" id="CP000453">
    <property type="protein sequence ID" value="ABI58221.1"/>
    <property type="molecule type" value="Genomic_DNA"/>
</dbReference>
<dbReference type="RefSeq" id="WP_011630614.1">
    <property type="nucleotide sequence ID" value="NC_008340.1"/>
</dbReference>
<dbReference type="SMR" id="Q0A4L6"/>
<dbReference type="KEGG" id="aeh:Mlg_2881"/>
<dbReference type="eggNOG" id="COG0486">
    <property type="taxonomic scope" value="Bacteria"/>
</dbReference>
<dbReference type="HOGENOM" id="CLU_019624_4_1_6"/>
<dbReference type="OrthoDB" id="9805918at2"/>
<dbReference type="Proteomes" id="UP000001962">
    <property type="component" value="Chromosome"/>
</dbReference>
<dbReference type="GO" id="GO:0005829">
    <property type="term" value="C:cytosol"/>
    <property type="evidence" value="ECO:0007669"/>
    <property type="project" value="TreeGrafter"/>
</dbReference>
<dbReference type="GO" id="GO:0005525">
    <property type="term" value="F:GTP binding"/>
    <property type="evidence" value="ECO:0007669"/>
    <property type="project" value="UniProtKB-UniRule"/>
</dbReference>
<dbReference type="GO" id="GO:0003924">
    <property type="term" value="F:GTPase activity"/>
    <property type="evidence" value="ECO:0007669"/>
    <property type="project" value="UniProtKB-UniRule"/>
</dbReference>
<dbReference type="GO" id="GO:0046872">
    <property type="term" value="F:metal ion binding"/>
    <property type="evidence" value="ECO:0007669"/>
    <property type="project" value="UniProtKB-KW"/>
</dbReference>
<dbReference type="GO" id="GO:0030488">
    <property type="term" value="P:tRNA methylation"/>
    <property type="evidence" value="ECO:0007669"/>
    <property type="project" value="TreeGrafter"/>
</dbReference>
<dbReference type="GO" id="GO:0002098">
    <property type="term" value="P:tRNA wobble uridine modification"/>
    <property type="evidence" value="ECO:0007669"/>
    <property type="project" value="TreeGrafter"/>
</dbReference>
<dbReference type="CDD" id="cd04164">
    <property type="entry name" value="trmE"/>
    <property type="match status" value="1"/>
</dbReference>
<dbReference type="CDD" id="cd14858">
    <property type="entry name" value="TrmE_N"/>
    <property type="match status" value="1"/>
</dbReference>
<dbReference type="Gene3D" id="3.40.50.300">
    <property type="entry name" value="P-loop containing nucleotide triphosphate hydrolases"/>
    <property type="match status" value="1"/>
</dbReference>
<dbReference type="Gene3D" id="3.30.1360.120">
    <property type="entry name" value="Probable tRNA modification gtpase trme, domain 1"/>
    <property type="match status" value="1"/>
</dbReference>
<dbReference type="Gene3D" id="1.20.120.430">
    <property type="entry name" value="tRNA modification GTPase MnmE domain 2"/>
    <property type="match status" value="1"/>
</dbReference>
<dbReference type="HAMAP" id="MF_00379">
    <property type="entry name" value="GTPase_MnmE"/>
    <property type="match status" value="1"/>
</dbReference>
<dbReference type="InterPro" id="IPR031168">
    <property type="entry name" value="G_TrmE"/>
</dbReference>
<dbReference type="InterPro" id="IPR006073">
    <property type="entry name" value="GTP-bd"/>
</dbReference>
<dbReference type="InterPro" id="IPR018948">
    <property type="entry name" value="GTP-bd_TrmE_N"/>
</dbReference>
<dbReference type="InterPro" id="IPR004520">
    <property type="entry name" value="GTPase_MnmE"/>
</dbReference>
<dbReference type="InterPro" id="IPR027368">
    <property type="entry name" value="MnmE_dom2"/>
</dbReference>
<dbReference type="InterPro" id="IPR025867">
    <property type="entry name" value="MnmE_helical"/>
</dbReference>
<dbReference type="InterPro" id="IPR027417">
    <property type="entry name" value="P-loop_NTPase"/>
</dbReference>
<dbReference type="InterPro" id="IPR005225">
    <property type="entry name" value="Small_GTP-bd"/>
</dbReference>
<dbReference type="InterPro" id="IPR027266">
    <property type="entry name" value="TrmE/GcvT_dom1"/>
</dbReference>
<dbReference type="NCBIfam" id="TIGR00450">
    <property type="entry name" value="mnmE_trmE_thdF"/>
    <property type="match status" value="1"/>
</dbReference>
<dbReference type="NCBIfam" id="NF003661">
    <property type="entry name" value="PRK05291.1-3"/>
    <property type="match status" value="1"/>
</dbReference>
<dbReference type="NCBIfam" id="TIGR00231">
    <property type="entry name" value="small_GTP"/>
    <property type="match status" value="1"/>
</dbReference>
<dbReference type="PANTHER" id="PTHR42714">
    <property type="entry name" value="TRNA MODIFICATION GTPASE GTPBP3"/>
    <property type="match status" value="1"/>
</dbReference>
<dbReference type="PANTHER" id="PTHR42714:SF2">
    <property type="entry name" value="TRNA MODIFICATION GTPASE GTPBP3, MITOCHONDRIAL"/>
    <property type="match status" value="1"/>
</dbReference>
<dbReference type="Pfam" id="PF01926">
    <property type="entry name" value="MMR_HSR1"/>
    <property type="match status" value="1"/>
</dbReference>
<dbReference type="Pfam" id="PF12631">
    <property type="entry name" value="MnmE_helical"/>
    <property type="match status" value="1"/>
</dbReference>
<dbReference type="Pfam" id="PF10396">
    <property type="entry name" value="TrmE_N"/>
    <property type="match status" value="1"/>
</dbReference>
<dbReference type="SUPFAM" id="SSF52540">
    <property type="entry name" value="P-loop containing nucleoside triphosphate hydrolases"/>
    <property type="match status" value="1"/>
</dbReference>
<dbReference type="SUPFAM" id="SSF116878">
    <property type="entry name" value="TrmE connector domain"/>
    <property type="match status" value="1"/>
</dbReference>
<dbReference type="PROSITE" id="PS51709">
    <property type="entry name" value="G_TRME"/>
    <property type="match status" value="1"/>
</dbReference>
<proteinExistence type="inferred from homology"/>
<organism>
    <name type="scientific">Alkalilimnicola ehrlichii (strain ATCC BAA-1101 / DSM 17681 / MLHE-1)</name>
    <dbReference type="NCBI Taxonomy" id="187272"/>
    <lineage>
        <taxon>Bacteria</taxon>
        <taxon>Pseudomonadati</taxon>
        <taxon>Pseudomonadota</taxon>
        <taxon>Gammaproteobacteria</taxon>
        <taxon>Chromatiales</taxon>
        <taxon>Ectothiorhodospiraceae</taxon>
        <taxon>Alkalilimnicola</taxon>
    </lineage>
</organism>
<sequence length="444" mass="47246">MARTTICALATPPGRGGVAVIRVSGPAVPAIARALAGRLPEPRRAVLARFCDAGGDTLDEGLMLYFPAPRSFTGEDVLELQGHGGEVVVDRLLRRLHALGAHPARPGEFSERAFLNGRMDLTQAEAIADLIAADSEASAQAALRSLEGAFGDAVRELVARVTRLRVQVEAAIDFSDEEIDFLADEAVAGQIGALIDQLQALRDKAGQGRVLRDGMQVVLAGPPNAGKSSLLNALTEDDSAIVTEVPGTTRDLLREHLHIDGMPLHVIDTAGLRDDPDRIEAEGIRRARAAMAEADRVLLIQDIREPPIDPAALALPGDIPLTRVYNKVDLSDEAPGPRRAGDEVAIAVSALTGVGLPALRDHLKSVMGYGEAGSHFSARRRHLDALARAADHLALARRALVEEMAGEIAAEELRLVQHNLGEITGEFTSEDLLGEIFSSFCIGK</sequence>
<gene>
    <name evidence="1" type="primary">mnmE</name>
    <name evidence="1" type="synonym">trmE</name>
    <name type="ordered locus">Mlg_2881</name>
</gene>
<keyword id="KW-0963">Cytoplasm</keyword>
<keyword id="KW-0342">GTP-binding</keyword>
<keyword id="KW-0378">Hydrolase</keyword>
<keyword id="KW-0460">Magnesium</keyword>
<keyword id="KW-0479">Metal-binding</keyword>
<keyword id="KW-0547">Nucleotide-binding</keyword>
<keyword id="KW-0630">Potassium</keyword>
<keyword id="KW-1185">Reference proteome</keyword>
<keyword id="KW-0819">tRNA processing</keyword>
<comment type="function">
    <text evidence="1">Exhibits a very high intrinsic GTPase hydrolysis rate. Involved in the addition of a carboxymethylaminomethyl (cmnm) group at the wobble position (U34) of certain tRNAs, forming tRNA-cmnm(5)s(2)U34.</text>
</comment>
<comment type="cofactor">
    <cofactor evidence="1">
        <name>K(+)</name>
        <dbReference type="ChEBI" id="CHEBI:29103"/>
    </cofactor>
    <text evidence="1">Binds 1 potassium ion per subunit.</text>
</comment>
<comment type="subunit">
    <text evidence="1">Homodimer. Heterotetramer of two MnmE and two MnmG subunits.</text>
</comment>
<comment type="subcellular location">
    <subcellularLocation>
        <location evidence="1">Cytoplasm</location>
    </subcellularLocation>
</comment>
<comment type="similarity">
    <text evidence="1">Belongs to the TRAFAC class TrmE-Era-EngA-EngB-Septin-like GTPase superfamily. TrmE GTPase family.</text>
</comment>
<protein>
    <recommendedName>
        <fullName evidence="1">tRNA modification GTPase MnmE</fullName>
        <ecNumber evidence="1">3.6.-.-</ecNumber>
    </recommendedName>
</protein>
<accession>Q0A4L6</accession>
<reference key="1">
    <citation type="submission" date="2006-08" db="EMBL/GenBank/DDBJ databases">
        <title>Complete sequence of Alkalilimnicola ehrilichei MLHE-1.</title>
        <authorList>
            <person name="Copeland A."/>
            <person name="Lucas S."/>
            <person name="Lapidus A."/>
            <person name="Barry K."/>
            <person name="Detter J.C."/>
            <person name="Glavina del Rio T."/>
            <person name="Hammon N."/>
            <person name="Israni S."/>
            <person name="Dalin E."/>
            <person name="Tice H."/>
            <person name="Pitluck S."/>
            <person name="Sims D."/>
            <person name="Brettin T."/>
            <person name="Bruce D."/>
            <person name="Han C."/>
            <person name="Tapia R."/>
            <person name="Gilna P."/>
            <person name="Schmutz J."/>
            <person name="Larimer F."/>
            <person name="Land M."/>
            <person name="Hauser L."/>
            <person name="Kyrpides N."/>
            <person name="Mikhailova N."/>
            <person name="Oremland R.S."/>
            <person name="Hoeft S.E."/>
            <person name="Switzer-Blum J."/>
            <person name="Kulp T."/>
            <person name="King G."/>
            <person name="Tabita R."/>
            <person name="Witte B."/>
            <person name="Santini J.M."/>
            <person name="Basu P."/>
            <person name="Hollibaugh J.T."/>
            <person name="Xie G."/>
            <person name="Stolz J.F."/>
            <person name="Richardson P."/>
        </authorList>
    </citation>
    <scope>NUCLEOTIDE SEQUENCE [LARGE SCALE GENOMIC DNA]</scope>
    <source>
        <strain>ATCC BAA-1101 / DSM 17681 / MLHE-1</strain>
    </source>
</reference>
<evidence type="ECO:0000255" key="1">
    <source>
        <dbReference type="HAMAP-Rule" id="MF_00379"/>
    </source>
</evidence>
<feature type="chain" id="PRO_0000345703" description="tRNA modification GTPase MnmE">
    <location>
        <begin position="1"/>
        <end position="444"/>
    </location>
</feature>
<feature type="domain" description="TrmE-type G">
    <location>
        <begin position="214"/>
        <end position="368"/>
    </location>
</feature>
<feature type="binding site" evidence="1">
    <location>
        <position position="22"/>
    </location>
    <ligand>
        <name>(6S)-5-formyl-5,6,7,8-tetrahydrofolate</name>
        <dbReference type="ChEBI" id="CHEBI:57457"/>
    </ligand>
</feature>
<feature type="binding site" evidence="1">
    <location>
        <position position="79"/>
    </location>
    <ligand>
        <name>(6S)-5-formyl-5,6,7,8-tetrahydrofolate</name>
        <dbReference type="ChEBI" id="CHEBI:57457"/>
    </ligand>
</feature>
<feature type="binding site" evidence="1">
    <location>
        <position position="118"/>
    </location>
    <ligand>
        <name>(6S)-5-formyl-5,6,7,8-tetrahydrofolate</name>
        <dbReference type="ChEBI" id="CHEBI:57457"/>
    </ligand>
</feature>
<feature type="binding site" evidence="1">
    <location>
        <begin position="224"/>
        <end position="229"/>
    </location>
    <ligand>
        <name>GTP</name>
        <dbReference type="ChEBI" id="CHEBI:37565"/>
    </ligand>
</feature>
<feature type="binding site" evidence="1">
    <location>
        <position position="224"/>
    </location>
    <ligand>
        <name>K(+)</name>
        <dbReference type="ChEBI" id="CHEBI:29103"/>
    </ligand>
</feature>
<feature type="binding site" evidence="1">
    <location>
        <position position="228"/>
    </location>
    <ligand>
        <name>Mg(2+)</name>
        <dbReference type="ChEBI" id="CHEBI:18420"/>
    </ligand>
</feature>
<feature type="binding site" evidence="1">
    <location>
        <begin position="243"/>
        <end position="249"/>
    </location>
    <ligand>
        <name>GTP</name>
        <dbReference type="ChEBI" id="CHEBI:37565"/>
    </ligand>
</feature>
<feature type="binding site" evidence="1">
    <location>
        <position position="243"/>
    </location>
    <ligand>
        <name>K(+)</name>
        <dbReference type="ChEBI" id="CHEBI:29103"/>
    </ligand>
</feature>
<feature type="binding site" evidence="1">
    <location>
        <position position="245"/>
    </location>
    <ligand>
        <name>K(+)</name>
        <dbReference type="ChEBI" id="CHEBI:29103"/>
    </ligand>
</feature>
<feature type="binding site" evidence="1">
    <location>
        <position position="248"/>
    </location>
    <ligand>
        <name>K(+)</name>
        <dbReference type="ChEBI" id="CHEBI:29103"/>
    </ligand>
</feature>
<feature type="binding site" evidence="1">
    <location>
        <position position="249"/>
    </location>
    <ligand>
        <name>Mg(2+)</name>
        <dbReference type="ChEBI" id="CHEBI:18420"/>
    </ligand>
</feature>
<feature type="binding site" evidence="1">
    <location>
        <begin position="268"/>
        <end position="271"/>
    </location>
    <ligand>
        <name>GTP</name>
        <dbReference type="ChEBI" id="CHEBI:37565"/>
    </ligand>
</feature>
<feature type="binding site" evidence="1">
    <location>
        <position position="444"/>
    </location>
    <ligand>
        <name>(6S)-5-formyl-5,6,7,8-tetrahydrofolate</name>
        <dbReference type="ChEBI" id="CHEBI:57457"/>
    </ligand>
</feature>